<name>YBEY_BORBZ</name>
<feature type="chain" id="PRO_1000199956" description="Endoribonuclease YbeY">
    <location>
        <begin position="1"/>
        <end position="155"/>
    </location>
</feature>
<feature type="binding site" evidence="1">
    <location>
        <position position="120"/>
    </location>
    <ligand>
        <name>Zn(2+)</name>
        <dbReference type="ChEBI" id="CHEBI:29105"/>
        <note>catalytic</note>
    </ligand>
</feature>
<feature type="binding site" evidence="1">
    <location>
        <position position="124"/>
    </location>
    <ligand>
        <name>Zn(2+)</name>
        <dbReference type="ChEBI" id="CHEBI:29105"/>
        <note>catalytic</note>
    </ligand>
</feature>
<feature type="binding site" evidence="1">
    <location>
        <position position="130"/>
    </location>
    <ligand>
        <name>Zn(2+)</name>
        <dbReference type="ChEBI" id="CHEBI:29105"/>
        <note>catalytic</note>
    </ligand>
</feature>
<accession>B7J0Z6</accession>
<keyword id="KW-0963">Cytoplasm</keyword>
<keyword id="KW-0255">Endonuclease</keyword>
<keyword id="KW-0378">Hydrolase</keyword>
<keyword id="KW-0479">Metal-binding</keyword>
<keyword id="KW-0540">Nuclease</keyword>
<keyword id="KW-0690">Ribosome biogenesis</keyword>
<keyword id="KW-0698">rRNA processing</keyword>
<keyword id="KW-0862">Zinc</keyword>
<reference key="1">
    <citation type="journal article" date="2011" name="J. Bacteriol.">
        <title>Whole-genome sequences of thirteen isolates of Borrelia burgdorferi.</title>
        <authorList>
            <person name="Schutzer S.E."/>
            <person name="Fraser-Liggett C.M."/>
            <person name="Casjens S.R."/>
            <person name="Qiu W.G."/>
            <person name="Dunn J.J."/>
            <person name="Mongodin E.F."/>
            <person name="Luft B.J."/>
        </authorList>
    </citation>
    <scope>NUCLEOTIDE SEQUENCE [LARGE SCALE GENOMIC DNA]</scope>
    <source>
        <strain>ZS7</strain>
    </source>
</reference>
<evidence type="ECO:0000255" key="1">
    <source>
        <dbReference type="HAMAP-Rule" id="MF_00009"/>
    </source>
</evidence>
<dbReference type="EC" id="3.1.-.-" evidence="1"/>
<dbReference type="EMBL" id="CP001205">
    <property type="protein sequence ID" value="ACK74703.1"/>
    <property type="molecule type" value="Genomic_DNA"/>
</dbReference>
<dbReference type="RefSeq" id="WP_002658307.1">
    <property type="nucleotide sequence ID" value="NC_011728.1"/>
</dbReference>
<dbReference type="SMR" id="B7J0Z6"/>
<dbReference type="GeneID" id="56568157"/>
<dbReference type="KEGG" id="bbz:BbuZS7_0061"/>
<dbReference type="HOGENOM" id="CLU_106710_3_3_12"/>
<dbReference type="Proteomes" id="UP000006901">
    <property type="component" value="Chromosome"/>
</dbReference>
<dbReference type="GO" id="GO:0005737">
    <property type="term" value="C:cytoplasm"/>
    <property type="evidence" value="ECO:0007669"/>
    <property type="project" value="UniProtKB-SubCell"/>
</dbReference>
<dbReference type="GO" id="GO:0004222">
    <property type="term" value="F:metalloendopeptidase activity"/>
    <property type="evidence" value="ECO:0007669"/>
    <property type="project" value="InterPro"/>
</dbReference>
<dbReference type="GO" id="GO:0004521">
    <property type="term" value="F:RNA endonuclease activity"/>
    <property type="evidence" value="ECO:0007669"/>
    <property type="project" value="UniProtKB-UniRule"/>
</dbReference>
<dbReference type="GO" id="GO:0008270">
    <property type="term" value="F:zinc ion binding"/>
    <property type="evidence" value="ECO:0007669"/>
    <property type="project" value="UniProtKB-UniRule"/>
</dbReference>
<dbReference type="GO" id="GO:0006364">
    <property type="term" value="P:rRNA processing"/>
    <property type="evidence" value="ECO:0007669"/>
    <property type="project" value="UniProtKB-UniRule"/>
</dbReference>
<dbReference type="Gene3D" id="3.40.390.30">
    <property type="entry name" value="Metalloproteases ('zincins'), catalytic domain"/>
    <property type="match status" value="1"/>
</dbReference>
<dbReference type="HAMAP" id="MF_00009">
    <property type="entry name" value="Endoribonucl_YbeY"/>
    <property type="match status" value="1"/>
</dbReference>
<dbReference type="InterPro" id="IPR023091">
    <property type="entry name" value="MetalPrtase_cat_dom_sf_prd"/>
</dbReference>
<dbReference type="InterPro" id="IPR002036">
    <property type="entry name" value="YbeY"/>
</dbReference>
<dbReference type="InterPro" id="IPR020549">
    <property type="entry name" value="YbeY_CS"/>
</dbReference>
<dbReference type="NCBIfam" id="TIGR00043">
    <property type="entry name" value="rRNA maturation RNase YbeY"/>
    <property type="match status" value="1"/>
</dbReference>
<dbReference type="PANTHER" id="PTHR46986">
    <property type="entry name" value="ENDORIBONUCLEASE YBEY, CHLOROPLASTIC"/>
    <property type="match status" value="1"/>
</dbReference>
<dbReference type="PANTHER" id="PTHR46986:SF1">
    <property type="entry name" value="ENDORIBONUCLEASE YBEY, CHLOROPLASTIC"/>
    <property type="match status" value="1"/>
</dbReference>
<dbReference type="Pfam" id="PF02130">
    <property type="entry name" value="YbeY"/>
    <property type="match status" value="1"/>
</dbReference>
<dbReference type="SUPFAM" id="SSF55486">
    <property type="entry name" value="Metalloproteases ('zincins'), catalytic domain"/>
    <property type="match status" value="1"/>
</dbReference>
<dbReference type="PROSITE" id="PS01306">
    <property type="entry name" value="UPF0054"/>
    <property type="match status" value="1"/>
</dbReference>
<sequence>MSKSDLNLLVENIKFEHLNVFYDFVVSVLNALSISDFELSVILCDNAYIQELNNKFRNKNEPTDVLSFNYNEHNELNEDLVDGINYKIQGDLVISFEYLKFSAQEFNVEIYEELQRVTIHGILHLMGYKHETNDFQKEGMLILQENILKENKRVF</sequence>
<proteinExistence type="inferred from homology"/>
<gene>
    <name evidence="1" type="primary">ybeY</name>
    <name type="ordered locus">BbuZS7_0061</name>
</gene>
<comment type="function">
    <text evidence="1">Single strand-specific metallo-endoribonuclease involved in late-stage 70S ribosome quality control and in maturation of the 3' terminus of the 16S rRNA.</text>
</comment>
<comment type="cofactor">
    <cofactor evidence="1">
        <name>Zn(2+)</name>
        <dbReference type="ChEBI" id="CHEBI:29105"/>
    </cofactor>
    <text evidence="1">Binds 1 zinc ion.</text>
</comment>
<comment type="subcellular location">
    <subcellularLocation>
        <location evidence="1">Cytoplasm</location>
    </subcellularLocation>
</comment>
<comment type="similarity">
    <text evidence="1">Belongs to the endoribonuclease YbeY family.</text>
</comment>
<organism>
    <name type="scientific">Borreliella burgdorferi (strain ZS7)</name>
    <name type="common">Borrelia burgdorferi</name>
    <dbReference type="NCBI Taxonomy" id="445985"/>
    <lineage>
        <taxon>Bacteria</taxon>
        <taxon>Pseudomonadati</taxon>
        <taxon>Spirochaetota</taxon>
        <taxon>Spirochaetia</taxon>
        <taxon>Spirochaetales</taxon>
        <taxon>Borreliaceae</taxon>
        <taxon>Borreliella</taxon>
    </lineage>
</organism>
<protein>
    <recommendedName>
        <fullName evidence="1">Endoribonuclease YbeY</fullName>
        <ecNumber evidence="1">3.1.-.-</ecNumber>
    </recommendedName>
</protein>